<accession>Q5FX52</accession>
<evidence type="ECO:0000250" key="1">
    <source>
        <dbReference type="UniProtKB" id="P10688"/>
    </source>
</evidence>
<evidence type="ECO:0000250" key="2">
    <source>
        <dbReference type="UniProtKB" id="Q86YW0"/>
    </source>
</evidence>
<evidence type="ECO:0000250" key="3">
    <source>
        <dbReference type="UniProtKB" id="Q8K4D7"/>
    </source>
</evidence>
<evidence type="ECO:0000255" key="4">
    <source>
        <dbReference type="PROSITE-ProRule" id="PRU00041"/>
    </source>
</evidence>
<evidence type="ECO:0000255" key="5">
    <source>
        <dbReference type="PROSITE-ProRule" id="PRU00270"/>
    </source>
</evidence>
<evidence type="ECO:0000255" key="6">
    <source>
        <dbReference type="PROSITE-ProRule" id="PRU00271"/>
    </source>
</evidence>
<evidence type="ECO:0000255" key="7">
    <source>
        <dbReference type="PROSITE-ProRule" id="PRU00448"/>
    </source>
</evidence>
<evidence type="ECO:0000269" key="8">
    <source>
    </source>
</evidence>
<evidence type="ECO:0000305" key="9"/>
<evidence type="ECO:0000312" key="10">
    <source>
        <dbReference type="EMBL" id="AAW66659.1"/>
    </source>
</evidence>
<evidence type="ECO:0000312" key="11">
    <source>
        <dbReference type="RGD" id="1359567"/>
    </source>
</evidence>
<dbReference type="EC" id="3.1.4.11"/>
<dbReference type="EMBL" id="AY885259">
    <property type="protein sequence ID" value="AAW66659.1"/>
    <property type="molecule type" value="mRNA"/>
</dbReference>
<dbReference type="RefSeq" id="NP_001012234.1">
    <property type="nucleotide sequence ID" value="NM_001012234.2"/>
</dbReference>
<dbReference type="RefSeq" id="XP_006237659.1">
    <property type="nucleotide sequence ID" value="XM_006237597.3"/>
</dbReference>
<dbReference type="RefSeq" id="XP_017448259.1">
    <property type="nucleotide sequence ID" value="XM_017592770.1"/>
</dbReference>
<dbReference type="RefSeq" id="XP_063142523.1">
    <property type="nucleotide sequence ID" value="XM_063286453.1"/>
</dbReference>
<dbReference type="RefSeq" id="XP_063142524.1">
    <property type="nucleotide sequence ID" value="XM_063286454.1"/>
</dbReference>
<dbReference type="SMR" id="Q5FX52"/>
<dbReference type="FunCoup" id="Q5FX52">
    <property type="interactions" value="113"/>
</dbReference>
<dbReference type="STRING" id="10116.ENSRNOP00000011376"/>
<dbReference type="iPTMnet" id="Q5FX52"/>
<dbReference type="PhosphoSitePlus" id="Q5FX52"/>
<dbReference type="PaxDb" id="10116-ENSRNOP00000011376"/>
<dbReference type="Ensembl" id="ENSRNOT00000011376.5">
    <property type="protein sequence ID" value="ENSRNOP00000011376.4"/>
    <property type="gene ID" value="ENSRNOG00000008514.7"/>
</dbReference>
<dbReference type="GeneID" id="497197"/>
<dbReference type="KEGG" id="rno:497197"/>
<dbReference type="UCSC" id="RGD:1359567">
    <property type="organism name" value="rat"/>
</dbReference>
<dbReference type="AGR" id="RGD:1359567"/>
<dbReference type="CTD" id="89869"/>
<dbReference type="RGD" id="1359567">
    <property type="gene designation" value="Plcz1"/>
</dbReference>
<dbReference type="eggNOG" id="KOG0169">
    <property type="taxonomic scope" value="Eukaryota"/>
</dbReference>
<dbReference type="GeneTree" id="ENSGT00940000159950"/>
<dbReference type="HOGENOM" id="CLU_002738_0_3_1"/>
<dbReference type="InParanoid" id="Q5FX52"/>
<dbReference type="OMA" id="DAWDNDE"/>
<dbReference type="OrthoDB" id="269822at2759"/>
<dbReference type="PhylomeDB" id="Q5FX52"/>
<dbReference type="TreeFam" id="TF313216"/>
<dbReference type="Reactome" id="R-RNO-1855204">
    <property type="pathway name" value="Synthesis of IP3 and IP4 in the cytosol"/>
</dbReference>
<dbReference type="PRO" id="PR:Q5FX52"/>
<dbReference type="Proteomes" id="UP000002494">
    <property type="component" value="Chromosome 4"/>
</dbReference>
<dbReference type="Bgee" id="ENSRNOG00000008514">
    <property type="expression patterns" value="Expressed in testis"/>
</dbReference>
<dbReference type="GO" id="GO:0005737">
    <property type="term" value="C:cytoplasm"/>
    <property type="evidence" value="ECO:0000314"/>
    <property type="project" value="UniProtKB"/>
</dbReference>
<dbReference type="GO" id="GO:0005730">
    <property type="term" value="C:nucleolus"/>
    <property type="evidence" value="ECO:0000266"/>
    <property type="project" value="RGD"/>
</dbReference>
<dbReference type="GO" id="GO:0005654">
    <property type="term" value="C:nucleoplasm"/>
    <property type="evidence" value="ECO:0000266"/>
    <property type="project" value="RGD"/>
</dbReference>
<dbReference type="GO" id="GO:0005634">
    <property type="term" value="C:nucleus"/>
    <property type="evidence" value="ECO:0000266"/>
    <property type="project" value="RGD"/>
</dbReference>
<dbReference type="GO" id="GO:0048471">
    <property type="term" value="C:perinuclear region of cytoplasm"/>
    <property type="evidence" value="ECO:0007669"/>
    <property type="project" value="UniProtKB-SubCell"/>
</dbReference>
<dbReference type="GO" id="GO:0045120">
    <property type="term" value="C:pronucleus"/>
    <property type="evidence" value="ECO:0000266"/>
    <property type="project" value="RGD"/>
</dbReference>
<dbReference type="GO" id="GO:0061827">
    <property type="term" value="C:sperm head"/>
    <property type="evidence" value="ECO:0000266"/>
    <property type="project" value="RGD"/>
</dbReference>
<dbReference type="GO" id="GO:0005509">
    <property type="term" value="F:calcium ion binding"/>
    <property type="evidence" value="ECO:0007669"/>
    <property type="project" value="InterPro"/>
</dbReference>
<dbReference type="GO" id="GO:0032266">
    <property type="term" value="F:phosphatidylinositol-3-phosphate binding"/>
    <property type="evidence" value="ECO:0000266"/>
    <property type="project" value="RGD"/>
</dbReference>
<dbReference type="GO" id="GO:0005546">
    <property type="term" value="F:phosphatidylinositol-4,5-bisphosphate binding"/>
    <property type="evidence" value="ECO:0000266"/>
    <property type="project" value="RGD"/>
</dbReference>
<dbReference type="GO" id="GO:0004435">
    <property type="term" value="F:phosphatidylinositol-4,5-bisphosphate phospholipase C activity"/>
    <property type="evidence" value="ECO:0000266"/>
    <property type="project" value="RGD"/>
</dbReference>
<dbReference type="GO" id="GO:0010314">
    <property type="term" value="F:phosphatidylinositol-5-phosphate binding"/>
    <property type="evidence" value="ECO:0000266"/>
    <property type="project" value="RGD"/>
</dbReference>
<dbReference type="GO" id="GO:0004629">
    <property type="term" value="F:phospholipase C activity"/>
    <property type="evidence" value="ECO:0000266"/>
    <property type="project" value="RGD"/>
</dbReference>
<dbReference type="GO" id="GO:0006816">
    <property type="term" value="P:calcium ion transport"/>
    <property type="evidence" value="ECO:0000266"/>
    <property type="project" value="RGD"/>
</dbReference>
<dbReference type="GO" id="GO:0007343">
    <property type="term" value="P:egg activation"/>
    <property type="evidence" value="ECO:0000250"/>
    <property type="project" value="UniProtKB"/>
</dbReference>
<dbReference type="GO" id="GO:0035556">
    <property type="term" value="P:intracellular signal transduction"/>
    <property type="evidence" value="ECO:0007669"/>
    <property type="project" value="InterPro"/>
</dbReference>
<dbReference type="GO" id="GO:0016042">
    <property type="term" value="P:lipid catabolic process"/>
    <property type="evidence" value="ECO:0007669"/>
    <property type="project" value="UniProtKB-KW"/>
</dbReference>
<dbReference type="GO" id="GO:0007204">
    <property type="term" value="P:positive regulation of cytosolic calcium ion concentration"/>
    <property type="evidence" value="ECO:0000266"/>
    <property type="project" value="RGD"/>
</dbReference>
<dbReference type="GO" id="GO:0060470">
    <property type="term" value="P:positive regulation of cytosolic calcium ion concentration involved in egg activation"/>
    <property type="evidence" value="ECO:0000314"/>
    <property type="project" value="UniProtKB"/>
</dbReference>
<dbReference type="CDD" id="cd00275">
    <property type="entry name" value="C2_PLC_like"/>
    <property type="match status" value="1"/>
</dbReference>
<dbReference type="FunFam" id="1.10.238.10:FF:000005">
    <property type="entry name" value="Phosphoinositide phospholipase C"/>
    <property type="match status" value="1"/>
</dbReference>
<dbReference type="FunFam" id="2.60.40.150:FF:000147">
    <property type="entry name" value="Phosphoinositide phospholipase C"/>
    <property type="match status" value="1"/>
</dbReference>
<dbReference type="Gene3D" id="2.60.40.150">
    <property type="entry name" value="C2 domain"/>
    <property type="match status" value="1"/>
</dbReference>
<dbReference type="Gene3D" id="1.10.238.10">
    <property type="entry name" value="EF-hand"/>
    <property type="match status" value="1"/>
</dbReference>
<dbReference type="Gene3D" id="3.20.20.190">
    <property type="entry name" value="Phosphatidylinositol (PI) phosphodiesterase"/>
    <property type="match status" value="1"/>
</dbReference>
<dbReference type="InterPro" id="IPR000008">
    <property type="entry name" value="C2_dom"/>
</dbReference>
<dbReference type="InterPro" id="IPR035892">
    <property type="entry name" value="C2_domain_sf"/>
</dbReference>
<dbReference type="InterPro" id="IPR011992">
    <property type="entry name" value="EF-hand-dom_pair"/>
</dbReference>
<dbReference type="InterPro" id="IPR002048">
    <property type="entry name" value="EF_hand_dom"/>
</dbReference>
<dbReference type="InterPro" id="IPR001192">
    <property type="entry name" value="PI-PLC_fam"/>
</dbReference>
<dbReference type="InterPro" id="IPR017946">
    <property type="entry name" value="PLC-like_Pdiesterase_TIM-brl"/>
</dbReference>
<dbReference type="InterPro" id="IPR015359">
    <property type="entry name" value="PLC_EF-hand-like"/>
</dbReference>
<dbReference type="InterPro" id="IPR000909">
    <property type="entry name" value="PLipase_C_PInositol-sp_X_dom"/>
</dbReference>
<dbReference type="InterPro" id="IPR001711">
    <property type="entry name" value="PLipase_C_Pinositol-sp_Y"/>
</dbReference>
<dbReference type="PANTHER" id="PTHR10336:SF29">
    <property type="entry name" value="1-PHOSPHATIDYLINOSITOL 4,5-BISPHOSPHATE PHOSPHODIESTERASE ZETA-1"/>
    <property type="match status" value="1"/>
</dbReference>
<dbReference type="PANTHER" id="PTHR10336">
    <property type="entry name" value="PHOSPHOINOSITIDE-SPECIFIC PHOSPHOLIPASE C FAMILY PROTEIN"/>
    <property type="match status" value="1"/>
</dbReference>
<dbReference type="Pfam" id="PF00168">
    <property type="entry name" value="C2"/>
    <property type="match status" value="1"/>
</dbReference>
<dbReference type="Pfam" id="PF09279">
    <property type="entry name" value="EF-hand_like"/>
    <property type="match status" value="1"/>
</dbReference>
<dbReference type="Pfam" id="PF00388">
    <property type="entry name" value="PI-PLC-X"/>
    <property type="match status" value="1"/>
</dbReference>
<dbReference type="Pfam" id="PF00387">
    <property type="entry name" value="PI-PLC-Y"/>
    <property type="match status" value="1"/>
</dbReference>
<dbReference type="PRINTS" id="PR00390">
    <property type="entry name" value="PHPHLIPASEC"/>
</dbReference>
<dbReference type="SMART" id="SM00239">
    <property type="entry name" value="C2"/>
    <property type="match status" value="1"/>
</dbReference>
<dbReference type="SMART" id="SM00148">
    <property type="entry name" value="PLCXc"/>
    <property type="match status" value="1"/>
</dbReference>
<dbReference type="SMART" id="SM00149">
    <property type="entry name" value="PLCYc"/>
    <property type="match status" value="1"/>
</dbReference>
<dbReference type="SUPFAM" id="SSF49562">
    <property type="entry name" value="C2 domain (Calcium/lipid-binding domain, CaLB)"/>
    <property type="match status" value="1"/>
</dbReference>
<dbReference type="SUPFAM" id="SSF47473">
    <property type="entry name" value="EF-hand"/>
    <property type="match status" value="1"/>
</dbReference>
<dbReference type="SUPFAM" id="SSF51695">
    <property type="entry name" value="PLC-like phosphodiesterases"/>
    <property type="match status" value="1"/>
</dbReference>
<dbReference type="PROSITE" id="PS50004">
    <property type="entry name" value="C2"/>
    <property type="match status" value="1"/>
</dbReference>
<dbReference type="PROSITE" id="PS50222">
    <property type="entry name" value="EF_HAND_2"/>
    <property type="match status" value="1"/>
</dbReference>
<dbReference type="PROSITE" id="PS50007">
    <property type="entry name" value="PIPLC_X_DOMAIN"/>
    <property type="match status" value="1"/>
</dbReference>
<dbReference type="PROSITE" id="PS50008">
    <property type="entry name" value="PIPLC_Y_DOMAIN"/>
    <property type="match status" value="1"/>
</dbReference>
<organism>
    <name type="scientific">Rattus norvegicus</name>
    <name type="common">Rat</name>
    <dbReference type="NCBI Taxonomy" id="10116"/>
    <lineage>
        <taxon>Eukaryota</taxon>
        <taxon>Metazoa</taxon>
        <taxon>Chordata</taxon>
        <taxon>Craniata</taxon>
        <taxon>Vertebrata</taxon>
        <taxon>Euteleostomi</taxon>
        <taxon>Mammalia</taxon>
        <taxon>Eutheria</taxon>
        <taxon>Euarchontoglires</taxon>
        <taxon>Glires</taxon>
        <taxon>Rodentia</taxon>
        <taxon>Myomorpha</taxon>
        <taxon>Muroidea</taxon>
        <taxon>Muridae</taxon>
        <taxon>Murinae</taxon>
        <taxon>Rattus</taxon>
    </lineage>
</organism>
<name>PLCZ1_RAT</name>
<keyword id="KW-0106">Calcium</keyword>
<keyword id="KW-0963">Cytoplasm</keyword>
<keyword id="KW-0217">Developmental protein</keyword>
<keyword id="KW-0278">Fertilization</keyword>
<keyword id="KW-0378">Hydrolase</keyword>
<keyword id="KW-0442">Lipid degradation</keyword>
<keyword id="KW-0443">Lipid metabolism</keyword>
<keyword id="KW-0539">Nucleus</keyword>
<keyword id="KW-1185">Reference proteome</keyword>
<keyword id="KW-0807">Transducer</keyword>
<proteinExistence type="evidence at transcript level"/>
<protein>
    <recommendedName>
        <fullName>1-phosphatidylinositol 4,5-bisphosphate phosphodiesterase zeta-1</fullName>
        <ecNumber>3.1.4.11</ecNumber>
    </recommendedName>
    <alternativeName>
        <fullName>Phosphoinositide phospholipase C-zeta-1</fullName>
    </alternativeName>
    <alternativeName>
        <fullName evidence="2">Phospholipase C-zeta-1</fullName>
        <shortName evidence="2">PLC-zeta-1</shortName>
    </alternativeName>
</protein>
<comment type="function">
    <text evidence="2 3 8 9">The production of the second messenger molecules diacylglycerol (DAG) and inositol 1,4,5-trisphosphate (IP3) is mediated by activated phosphatidylinositol-specific phospholipase C enzymes. In vitro, hydrolyzes PtdIns(4,5)P2 in a Ca(2+)-dependent manner. Triggers intracellular Ca(2+) oscillations in oocytes solely during M phase and is involved in inducing oocyte activation and initiating embryonic development up to the blastocyst stage. Is therefore a strong candidate for the egg-activating soluble sperm factor that is transferred from the sperm into the egg cytoplasm following gamete membrane fusion. May exert an inhibitory effect on phospholipase-C-coupled processes that depend on calcium ions and protein kinase C, including CFTR trafficking and function.</text>
</comment>
<comment type="catalytic activity">
    <reaction evidence="3">
        <text>a 1,2-diacyl-sn-glycero-3-phospho-(1D-myo-inositol-4,5-bisphosphate) + H2O = 1D-myo-inositol 1,4,5-trisphosphate + a 1,2-diacyl-sn-glycerol + H(+)</text>
        <dbReference type="Rhea" id="RHEA:33179"/>
        <dbReference type="ChEBI" id="CHEBI:15377"/>
        <dbReference type="ChEBI" id="CHEBI:15378"/>
        <dbReference type="ChEBI" id="CHEBI:17815"/>
        <dbReference type="ChEBI" id="CHEBI:58456"/>
        <dbReference type="ChEBI" id="CHEBI:203600"/>
        <dbReference type="EC" id="3.1.4.11"/>
    </reaction>
    <physiologicalReaction direction="left-to-right" evidence="3">
        <dbReference type="Rhea" id="RHEA:33180"/>
    </physiologicalReaction>
</comment>
<comment type="cofactor">
    <cofactor evidence="3">
        <name>Ca(2+)</name>
        <dbReference type="ChEBI" id="CHEBI:29108"/>
    </cofactor>
</comment>
<comment type="subunit">
    <text evidence="3">Interacts via its C2 domain with PtdIns(3)P and, to a lesser extent, PtdIns(5)P in vitro.</text>
</comment>
<comment type="subcellular location">
    <subcellularLocation>
        <location evidence="3">Nucleus</location>
    </subcellularLocation>
    <subcellularLocation>
        <location evidence="3">Cytoplasm</location>
        <location evidence="3">Perinuclear region</location>
    </subcellularLocation>
    <text evidence="3">Exhibits alternative cytoplasmic/nuclear localization during development. Translocates from the pronucleus into cytoplasm upon nuclear envelope breakdown for mitosis and localizes again to the pronucleus at interphase following meiosis and mitosis (By similarity).</text>
</comment>
<comment type="domain">
    <text evidence="3">The EF-hand and C2 domains are essential for triggering Ca(2+) oscillating activity and the regulation of PLCZ1 enzyme activity.</text>
</comment>
<comment type="domain">
    <text evidence="3">The X-Y linker region between PI-PLC X-box and Y-box domains may be a target for proteolysis and may play an important regulatory role during fertilization.</text>
</comment>
<reference evidence="10" key="1">
    <citation type="submission" date="2005-01" db="EMBL/GenBank/DDBJ databases">
        <authorList>
            <person name="Saunders C.M."/>
        </authorList>
    </citation>
    <scope>NUCLEOTIDE SEQUENCE [MRNA]</scope>
    <source>
        <strain evidence="10">Sprague-Dawley</strain>
        <tissue evidence="10">Testis</tissue>
    </source>
</reference>
<reference evidence="9" key="2">
    <citation type="journal article" date="2008" name="Biol. Reprod.">
        <title>Difference in Ca2+ oscillation-inducing activity and nuclear translocation ability of PLCZ1, an egg-activating sperm factor candidate, between mouse, rat, human, and medaka fish.</title>
        <authorList>
            <person name="Ito M."/>
            <person name="Shikano T."/>
            <person name="Oda S."/>
            <person name="Horiguchi T."/>
            <person name="Tanimoto S."/>
            <person name="Awaji T."/>
            <person name="Mitani H."/>
            <person name="Miyazaki S."/>
        </authorList>
    </citation>
    <scope>FUNCTION</scope>
</reference>
<feature type="chain" id="PRO_0000347248" description="1-phosphatidylinositol 4,5-bisphosphate phosphodiesterase zeta-1">
    <location>
        <begin position="1"/>
        <end position="645"/>
    </location>
</feature>
<feature type="domain" description="EF-hand" evidence="7">
    <location>
        <begin position="42"/>
        <end position="77"/>
    </location>
</feature>
<feature type="domain" description="PI-PLC X-box" evidence="5">
    <location>
        <begin position="162"/>
        <end position="306"/>
    </location>
</feature>
<feature type="domain" description="PI-PLC Y-box" evidence="6">
    <location>
        <begin position="385"/>
        <end position="501"/>
    </location>
</feature>
<feature type="domain" description="C2" evidence="4">
    <location>
        <begin position="501"/>
        <end position="625"/>
    </location>
</feature>
<feature type="active site" evidence="1 5">
    <location>
        <position position="177"/>
    </location>
</feature>
<feature type="active site" evidence="1 5">
    <location>
        <position position="222"/>
    </location>
</feature>
<sequence length="645" mass="74315">MESHYELAEARWFMSKIQDYFRGGKISAGITHKLLEKLDFPCHFAHVKRIFKENDRHNQGRITTEDFRTIYRCIVHREEIVEIFNTYTENRKILPEDSLIEFLTQEQYEMEMDESSSVEIIQKYEPIAEVKNERQMSIEGFARYMFSSECLLFKETCNTVYQDMNKPLNDYYISSSHNTYLISDQILGPSDIWGYISALVKGCRCLEIDCWDGAQNEPIVYHGYTLTSKLLFKTVIQAINKYAFVTSDYPVVLSLENHCSPGQQEVMTDILQSTFGDFLLSDILDEFPDSLPSPEALKFKILVKNKKVGTLSETRERLGTDKRGIALDLEEEIYENEDEDSGKEPETWDDFLSRVKEEQEADPSTLSGIADAKKKIRKLRVALALSDLVIYTKAEKFRNFQYSRVYQQFNETTSMGESRARKLSKLRAHEFIFHTAAFITRVYPKFTRADSSNFNPQEFWNVGCQMVALNFQTPGLPMDLQNGKFLDNGGSGYVLKPDFLRDTTLGFNPNEPEGDGHPVTLTIRLISGIQLPVNVPSNTSDIIVIIEVYGVPNDHMKQQSRAVKNNAFSPRWNETFTFLIQVPELALIRFVVETQGFLSGNELLGQYTLPVLCMNKGYRRVPLFSKSGANLEPSSLFIYVWYYRE</sequence>
<gene>
    <name evidence="11" type="primary">Plcz1</name>
</gene>